<organism>
    <name type="scientific">Rattus norvegicus</name>
    <name type="common">Rat</name>
    <dbReference type="NCBI Taxonomy" id="10116"/>
    <lineage>
        <taxon>Eukaryota</taxon>
        <taxon>Metazoa</taxon>
        <taxon>Chordata</taxon>
        <taxon>Craniata</taxon>
        <taxon>Vertebrata</taxon>
        <taxon>Euteleostomi</taxon>
        <taxon>Mammalia</taxon>
        <taxon>Eutheria</taxon>
        <taxon>Euarchontoglires</taxon>
        <taxon>Glires</taxon>
        <taxon>Rodentia</taxon>
        <taxon>Myomorpha</taxon>
        <taxon>Muroidea</taxon>
        <taxon>Muridae</taxon>
        <taxon>Murinae</taxon>
        <taxon>Rattus</taxon>
    </lineage>
</organism>
<comment type="function">
    <text evidence="6 7 8">Stimulates GTP hydrolysis of members of the Rho family. Its action on RHOA activity and signaling is implicated in growth and stabilization of dendritic spines, and therefore in synaptic function, in hippocampal neurons. Critical for the stabilization of AMPA receptors at postsynaptic sites. Critical for the regulation of synaptic vesicle endocytosis at pre-synaptic terminals. Required for the localization of NR1D1 to dendrites, can suppress its repressor activity and protect it from proteasomal degradation.</text>
</comment>
<comment type="subunit">
    <text evidence="6 7 8 9">Interacts with HOMER1. Interacts with AMPA receptor complexes. Interacts with SH3GL2 (endophilin-A1). Interacts (via C-terminus) with NR1D1.</text>
</comment>
<comment type="subcellular location">
    <subcellularLocation>
        <location evidence="6 8">Postsynapse</location>
    </subcellularLocation>
    <subcellularLocation>
        <location evidence="6 10">Presynapse</location>
    </subcellularLocation>
    <subcellularLocation>
        <location evidence="6">Cell projection</location>
        <location evidence="6">Axon</location>
    </subcellularLocation>
    <subcellularLocation>
        <location evidence="6">Cell projection</location>
        <location evidence="6">Dendritic spine</location>
    </subcellularLocation>
    <subcellularLocation>
        <location evidence="1">Cell projection</location>
        <location evidence="1">Dendrite</location>
    </subcellularLocation>
    <subcellularLocation>
        <location evidence="1">Cytoplasm</location>
    </subcellularLocation>
</comment>
<comment type="tissue specificity">
    <text evidence="5 6">High expression in brain, particularly in the cerebellum, hippocampus, thalamus, frontal lobes, sensory cortex. Found in the myelin sheaths of peripheral nerves, chromaffin cells within the adrenal medulla, and in extra-adrenal chromaffin cells associated with celiac ganglia.</text>
</comment>
<dbReference type="EMBL" id="CH473966">
    <property type="protein sequence ID" value="EDL95953.1"/>
    <property type="molecule type" value="Genomic_DNA"/>
</dbReference>
<dbReference type="RefSeq" id="NP_001101318.1">
    <property type="nucleotide sequence ID" value="NM_001107848.2"/>
</dbReference>
<dbReference type="RefSeq" id="NP_001420966.1">
    <property type="nucleotide sequence ID" value="NM_001434037.1"/>
</dbReference>
<dbReference type="RefSeq" id="XP_006257134.1">
    <property type="nucleotide sequence ID" value="XM_006257072.3"/>
</dbReference>
<dbReference type="RefSeq" id="XP_017457518.1">
    <property type="nucleotide sequence ID" value="XM_017602029.1"/>
</dbReference>
<dbReference type="SMR" id="P0CAX5"/>
<dbReference type="FunCoup" id="P0CAX5">
    <property type="interactions" value="3524"/>
</dbReference>
<dbReference type="STRING" id="10116.ENSRNOP00000035867"/>
<dbReference type="PhosphoSitePlus" id="P0CAX5"/>
<dbReference type="PaxDb" id="10116-ENSRNOP00000035867"/>
<dbReference type="Ensembl" id="ENSRNOT00000034772.7">
    <property type="protein sequence ID" value="ENSRNOP00000035867.4"/>
    <property type="gene ID" value="ENSRNOG00000026573.8"/>
</dbReference>
<dbReference type="GeneID" id="312108"/>
<dbReference type="KEGG" id="rno:312108"/>
<dbReference type="AGR" id="RGD:1563435"/>
<dbReference type="CTD" id="4983"/>
<dbReference type="RGD" id="1563435">
    <property type="gene designation" value="Ophn1"/>
</dbReference>
<dbReference type="eggNOG" id="KOG1451">
    <property type="taxonomic scope" value="Eukaryota"/>
</dbReference>
<dbReference type="GeneTree" id="ENSGT00940000160157"/>
<dbReference type="HOGENOM" id="CLU_011532_2_1_1"/>
<dbReference type="InParanoid" id="P0CAX5"/>
<dbReference type="OMA" id="KEAPQMC"/>
<dbReference type="OrthoDB" id="3183924at2759"/>
<dbReference type="PhylomeDB" id="P0CAX5"/>
<dbReference type="Reactome" id="R-RNO-8980692">
    <property type="pathway name" value="RHOA GTPase cycle"/>
</dbReference>
<dbReference type="Reactome" id="R-RNO-9013026">
    <property type="pathway name" value="RHOB GTPase cycle"/>
</dbReference>
<dbReference type="Reactome" id="R-RNO-9013148">
    <property type="pathway name" value="CDC42 GTPase cycle"/>
</dbReference>
<dbReference type="Reactome" id="R-RNO-9013149">
    <property type="pathway name" value="RAC1 GTPase cycle"/>
</dbReference>
<dbReference type="Reactome" id="R-RNO-9013404">
    <property type="pathway name" value="RAC2 GTPase cycle"/>
</dbReference>
<dbReference type="Reactome" id="R-RNO-9013406">
    <property type="pathway name" value="RHOQ GTPase cycle"/>
</dbReference>
<dbReference type="Reactome" id="R-RNO-9013408">
    <property type="pathway name" value="RHOG GTPase cycle"/>
</dbReference>
<dbReference type="Reactome" id="R-RNO-9013409">
    <property type="pathway name" value="RHOJ GTPase cycle"/>
</dbReference>
<dbReference type="PRO" id="PR:P0CAX5"/>
<dbReference type="Proteomes" id="UP000002494">
    <property type="component" value="Chromosome X"/>
</dbReference>
<dbReference type="Proteomes" id="UP000234681">
    <property type="component" value="Chromosome x"/>
</dbReference>
<dbReference type="Bgee" id="ENSRNOG00000026573">
    <property type="expression patterns" value="Expressed in heart and 19 other cell types or tissues"/>
</dbReference>
<dbReference type="ExpressionAtlas" id="P0CAX5">
    <property type="expression patterns" value="baseline and differential"/>
</dbReference>
<dbReference type="GO" id="GO:0015629">
    <property type="term" value="C:actin cytoskeleton"/>
    <property type="evidence" value="ECO:0000266"/>
    <property type="project" value="RGD"/>
</dbReference>
<dbReference type="GO" id="GO:0005737">
    <property type="term" value="C:cytoplasm"/>
    <property type="evidence" value="ECO:0000266"/>
    <property type="project" value="RGD"/>
</dbReference>
<dbReference type="GO" id="GO:0030425">
    <property type="term" value="C:dendrite"/>
    <property type="evidence" value="ECO:0000266"/>
    <property type="project" value="RGD"/>
</dbReference>
<dbReference type="GO" id="GO:0043197">
    <property type="term" value="C:dendritic spine"/>
    <property type="evidence" value="ECO:0000266"/>
    <property type="project" value="RGD"/>
</dbReference>
<dbReference type="GO" id="GO:0098978">
    <property type="term" value="C:glutamatergic synapse"/>
    <property type="evidence" value="ECO:0000314"/>
    <property type="project" value="SynGO"/>
</dbReference>
<dbReference type="GO" id="GO:0098793">
    <property type="term" value="C:presynapse"/>
    <property type="evidence" value="ECO:0000314"/>
    <property type="project" value="SynGO"/>
</dbReference>
<dbReference type="GO" id="GO:0043195">
    <property type="term" value="C:terminal bouton"/>
    <property type="evidence" value="ECO:0000266"/>
    <property type="project" value="RGD"/>
</dbReference>
<dbReference type="GO" id="GO:0003779">
    <property type="term" value="F:actin binding"/>
    <property type="evidence" value="ECO:0000266"/>
    <property type="project" value="RGD"/>
</dbReference>
<dbReference type="GO" id="GO:0005096">
    <property type="term" value="F:GTPase activator activity"/>
    <property type="evidence" value="ECO:0000266"/>
    <property type="project" value="RGD"/>
</dbReference>
<dbReference type="GO" id="GO:0035255">
    <property type="term" value="F:ionotropic glutamate receptor binding"/>
    <property type="evidence" value="ECO:0000353"/>
    <property type="project" value="RGD"/>
</dbReference>
<dbReference type="GO" id="GO:0005543">
    <property type="term" value="F:phospholipid binding"/>
    <property type="evidence" value="ECO:0000266"/>
    <property type="project" value="RGD"/>
</dbReference>
<dbReference type="GO" id="GO:0030036">
    <property type="term" value="P:actin cytoskeleton organization"/>
    <property type="evidence" value="ECO:0000266"/>
    <property type="project" value="RGD"/>
</dbReference>
<dbReference type="GO" id="GO:0034329">
    <property type="term" value="P:cell junction assembly"/>
    <property type="evidence" value="ECO:0000250"/>
    <property type="project" value="UniProtKB"/>
</dbReference>
<dbReference type="GO" id="GO:0048667">
    <property type="term" value="P:cell morphogenesis involved in neuron differentiation"/>
    <property type="evidence" value="ECO:0000266"/>
    <property type="project" value="RGD"/>
</dbReference>
<dbReference type="GO" id="GO:0021707">
    <property type="term" value="P:cerebellar granule cell differentiation"/>
    <property type="evidence" value="ECO:0000266"/>
    <property type="project" value="RGD"/>
</dbReference>
<dbReference type="GO" id="GO:0021895">
    <property type="term" value="P:cerebral cortex neuron differentiation"/>
    <property type="evidence" value="ECO:0000266"/>
    <property type="project" value="RGD"/>
</dbReference>
<dbReference type="GO" id="GO:0045198">
    <property type="term" value="P:establishment of epithelial cell apical/basal polarity"/>
    <property type="evidence" value="ECO:0000250"/>
    <property type="project" value="UniProtKB"/>
</dbReference>
<dbReference type="GO" id="GO:0098880">
    <property type="term" value="P:maintenance of postsynaptic specialization structure"/>
    <property type="evidence" value="ECO:0000314"/>
    <property type="project" value="SynGO"/>
</dbReference>
<dbReference type="GO" id="GO:1901799">
    <property type="term" value="P:negative regulation of proteasomal protein catabolic process"/>
    <property type="evidence" value="ECO:0000266"/>
    <property type="project" value="RGD"/>
</dbReference>
<dbReference type="GO" id="GO:0030182">
    <property type="term" value="P:neuron differentiation"/>
    <property type="evidence" value="ECO:0000266"/>
    <property type="project" value="RGD"/>
</dbReference>
<dbReference type="GO" id="GO:0031175">
    <property type="term" value="P:neuron projection development"/>
    <property type="evidence" value="ECO:0000266"/>
    <property type="project" value="RGD"/>
</dbReference>
<dbReference type="GO" id="GO:0030100">
    <property type="term" value="P:regulation of endocytosis"/>
    <property type="evidence" value="ECO:0000266"/>
    <property type="project" value="RGD"/>
</dbReference>
<dbReference type="GO" id="GO:0099149">
    <property type="term" value="P:regulation of postsynaptic neurotransmitter receptor internalization"/>
    <property type="evidence" value="ECO:0000266"/>
    <property type="project" value="RGD"/>
</dbReference>
<dbReference type="GO" id="GO:0035023">
    <property type="term" value="P:regulation of Rho protein signal transduction"/>
    <property type="evidence" value="ECO:0000266"/>
    <property type="project" value="RGD"/>
</dbReference>
<dbReference type="GO" id="GO:0051966">
    <property type="term" value="P:regulation of synaptic transmission, glutamatergic"/>
    <property type="evidence" value="ECO:0000266"/>
    <property type="project" value="RGD"/>
</dbReference>
<dbReference type="GO" id="GO:1900242">
    <property type="term" value="P:regulation of synaptic vesicle endocytosis"/>
    <property type="evidence" value="ECO:0000314"/>
    <property type="project" value="SynGO"/>
</dbReference>
<dbReference type="GO" id="GO:0007165">
    <property type="term" value="P:signal transduction"/>
    <property type="evidence" value="ECO:0007669"/>
    <property type="project" value="InterPro"/>
</dbReference>
<dbReference type="GO" id="GO:0048488">
    <property type="term" value="P:synaptic vesicle endocytosis"/>
    <property type="evidence" value="ECO:0000266"/>
    <property type="project" value="RGD"/>
</dbReference>
<dbReference type="CDD" id="cd01249">
    <property type="entry name" value="BAR-PH_GRAF_family"/>
    <property type="match status" value="1"/>
</dbReference>
<dbReference type="CDD" id="cd07633">
    <property type="entry name" value="BAR_OPHN1"/>
    <property type="match status" value="1"/>
</dbReference>
<dbReference type="CDD" id="cd04374">
    <property type="entry name" value="RhoGAP_Graf"/>
    <property type="match status" value="1"/>
</dbReference>
<dbReference type="FunFam" id="2.30.29.30:FF:000183">
    <property type="entry name" value="Oligophrenin 1"/>
    <property type="match status" value="1"/>
</dbReference>
<dbReference type="FunFam" id="1.20.1270.60:FF:000001">
    <property type="entry name" value="Rho GTPase-activating protein 26"/>
    <property type="match status" value="1"/>
</dbReference>
<dbReference type="FunFam" id="1.10.555.10:FF:000008">
    <property type="entry name" value="Rho GTPase-activating protein 42"/>
    <property type="match status" value="1"/>
</dbReference>
<dbReference type="Gene3D" id="1.20.1270.60">
    <property type="entry name" value="Arfaptin homology (AH) domain/BAR domain"/>
    <property type="match status" value="1"/>
</dbReference>
<dbReference type="Gene3D" id="2.30.29.30">
    <property type="entry name" value="Pleckstrin-homology domain (PH domain)/Phosphotyrosine-binding domain (PTB)"/>
    <property type="match status" value="1"/>
</dbReference>
<dbReference type="Gene3D" id="1.10.555.10">
    <property type="entry name" value="Rho GTPase activation protein"/>
    <property type="match status" value="1"/>
</dbReference>
<dbReference type="InterPro" id="IPR027267">
    <property type="entry name" value="AH/BAR_dom_sf"/>
</dbReference>
<dbReference type="InterPro" id="IPR004148">
    <property type="entry name" value="BAR_dom"/>
</dbReference>
<dbReference type="InterPro" id="IPR047234">
    <property type="entry name" value="GRAF_fam"/>
</dbReference>
<dbReference type="InterPro" id="IPR047267">
    <property type="entry name" value="OPHN1_BAR"/>
</dbReference>
<dbReference type="InterPro" id="IPR011993">
    <property type="entry name" value="PH-like_dom_sf"/>
</dbReference>
<dbReference type="InterPro" id="IPR001849">
    <property type="entry name" value="PH_domain"/>
</dbReference>
<dbReference type="InterPro" id="IPR047225">
    <property type="entry name" value="PH_GRAF"/>
</dbReference>
<dbReference type="InterPro" id="IPR008936">
    <property type="entry name" value="Rho_GTPase_activation_prot"/>
</dbReference>
<dbReference type="InterPro" id="IPR000198">
    <property type="entry name" value="RhoGAP_dom"/>
</dbReference>
<dbReference type="PANTHER" id="PTHR12552">
    <property type="entry name" value="OLIGOPHRENIN 1"/>
    <property type="match status" value="1"/>
</dbReference>
<dbReference type="PANTHER" id="PTHR12552:SF2">
    <property type="entry name" value="OLIGOPHRENIN-1"/>
    <property type="match status" value="1"/>
</dbReference>
<dbReference type="Pfam" id="PF16746">
    <property type="entry name" value="BAR_3"/>
    <property type="match status" value="1"/>
</dbReference>
<dbReference type="Pfam" id="PF00169">
    <property type="entry name" value="PH"/>
    <property type="match status" value="1"/>
</dbReference>
<dbReference type="Pfam" id="PF00620">
    <property type="entry name" value="RhoGAP"/>
    <property type="match status" value="1"/>
</dbReference>
<dbReference type="SMART" id="SM00233">
    <property type="entry name" value="PH"/>
    <property type="match status" value="1"/>
</dbReference>
<dbReference type="SMART" id="SM00324">
    <property type="entry name" value="RhoGAP"/>
    <property type="match status" value="1"/>
</dbReference>
<dbReference type="SUPFAM" id="SSF103657">
    <property type="entry name" value="BAR/IMD domain-like"/>
    <property type="match status" value="1"/>
</dbReference>
<dbReference type="SUPFAM" id="SSF48350">
    <property type="entry name" value="GTPase activation domain, GAP"/>
    <property type="match status" value="1"/>
</dbReference>
<dbReference type="SUPFAM" id="SSF50729">
    <property type="entry name" value="PH domain-like"/>
    <property type="match status" value="1"/>
</dbReference>
<dbReference type="PROSITE" id="PS50003">
    <property type="entry name" value="PH_DOMAIN"/>
    <property type="match status" value="1"/>
</dbReference>
<dbReference type="PROSITE" id="PS50238">
    <property type="entry name" value="RHOGAP"/>
    <property type="match status" value="1"/>
</dbReference>
<evidence type="ECO:0000250" key="1">
    <source>
        <dbReference type="UniProtKB" id="Q99J31"/>
    </source>
</evidence>
<evidence type="ECO:0000255" key="2">
    <source>
        <dbReference type="PROSITE-ProRule" id="PRU00145"/>
    </source>
</evidence>
<evidence type="ECO:0000255" key="3">
    <source>
        <dbReference type="PROSITE-ProRule" id="PRU00172"/>
    </source>
</evidence>
<evidence type="ECO:0000256" key="4">
    <source>
        <dbReference type="SAM" id="MobiDB-lite"/>
    </source>
</evidence>
<evidence type="ECO:0000269" key="5">
    <source>
    </source>
</evidence>
<evidence type="ECO:0000269" key="6">
    <source>
    </source>
</evidence>
<evidence type="ECO:0000269" key="7">
    <source>
    </source>
</evidence>
<evidence type="ECO:0000269" key="8">
    <source>
    </source>
</evidence>
<evidence type="ECO:0000269" key="9">
    <source>
    </source>
</evidence>
<evidence type="ECO:0000305" key="10">
    <source>
    </source>
</evidence>
<proteinExistence type="evidence at protein level"/>
<name>OPHN1_RAT</name>
<gene>
    <name type="primary">Ophn1</name>
</gene>
<sequence>MGHPPLEFSDCYLDSPDFRERLKCYEQELERTNKFIKDVIKDGSALISAMRSYSSAVQKFSQTLQSFQFDFIGDTLTDDEINIAESFKEFAELLNEVENERMMMVQNASDLLIKPLETFRKEQIGFTKERKKKFEKDGERFYSLLDRHLHLSSKKKESQLLEADLQVDKERHNFFESSLDYVYQIQEVQESKKFNIVEPVLAFLHSLFISNSLTVELTQDFLPYKQQLQLSLQNTRNHFSSTREEMEELKKRMKEAPQTCKLPGQPTIEGYLYTQEKWALGISWVKYYCRYEKETRTLTMTPTEQKPGAKQGPVDLTLKYCVRRKTESIDKRFCFDIEANERTGTITLQAPSEANRRLWMEAMDGKEPIYHSPITKQEEMELNEVGFKFVRKCINFIETKGIKTEGLYRTVGSNIQVQKLLNAFFDPKCPGDVDFYNSDWDIKTITSSLKFYLRNLSEPVMTYKLHKELVSAAKSDNLDYRLGAIHSLVYKLPEKNREMLELLIKHLVNVCEHSKENLMTPSNMGVIFGPTLMRAQEDTVAAMMNIKFQNIVVEILIEHFGKIYLGPPEDSQVPPVPPPRVTARRHKPITISKRLLREKAVFYTPSLDDVEDEIHHPTPNGTIASNLDPPKQLQHLKLPMQKSGEMDPGRKSPSRPVSDCQTEPCLEADMGKLVYRLQDGGTKAIPKASNGPVPGSGHTKTSSFHIKRPAPRPIVHHKEGDTDCFSKVRPPGEKQTIIRPPVRPPDPPCRSSTSQKPESKPETVSSNAEEIPSSVVASRTRFFETASRKTGSSQGKLPGDES</sequence>
<protein>
    <recommendedName>
        <fullName>Oligophrenin-1</fullName>
    </recommendedName>
</protein>
<keyword id="KW-0966">Cell projection</keyword>
<keyword id="KW-0963">Cytoplasm</keyword>
<keyword id="KW-0254">Endocytosis</keyword>
<keyword id="KW-0343">GTPase activation</keyword>
<keyword id="KW-0524">Neurogenesis</keyword>
<keyword id="KW-1185">Reference proteome</keyword>
<keyword id="KW-0770">Synapse</keyword>
<feature type="chain" id="PRO_0000379470" description="Oligophrenin-1">
    <location>
        <begin position="1"/>
        <end position="802"/>
    </location>
</feature>
<feature type="domain" description="PH" evidence="2">
    <location>
        <begin position="265"/>
        <end position="368"/>
    </location>
</feature>
<feature type="domain" description="Rho-GAP" evidence="3">
    <location>
        <begin position="380"/>
        <end position="564"/>
    </location>
</feature>
<feature type="region of interest" description="Disordered" evidence="4">
    <location>
        <begin position="641"/>
        <end position="663"/>
    </location>
</feature>
<feature type="region of interest" description="Disordered" evidence="4">
    <location>
        <begin position="682"/>
        <end position="802"/>
    </location>
</feature>
<feature type="compositionally biased region" description="Basic and acidic residues" evidence="4">
    <location>
        <begin position="716"/>
        <end position="732"/>
    </location>
</feature>
<feature type="compositionally biased region" description="Polar residues" evidence="4">
    <location>
        <begin position="751"/>
        <end position="768"/>
    </location>
</feature>
<feature type="site" description="Arginine finger; crucial for GTP hydrolysis by stabilizing the transition state" evidence="3">
    <location>
        <position position="409"/>
    </location>
</feature>
<reference key="1">
    <citation type="submission" date="2005-07" db="EMBL/GenBank/DDBJ databases">
        <authorList>
            <person name="Mural R.J."/>
            <person name="Adams M.D."/>
            <person name="Myers E.W."/>
            <person name="Smith H.O."/>
            <person name="Venter J.C."/>
        </authorList>
    </citation>
    <scope>NUCLEOTIDE SEQUENCE [LARGE SCALE GENOMIC DNA]</scope>
</reference>
<reference key="2">
    <citation type="journal article" date="2004" name="Nat. Neurosci.">
        <title>The X-linked mental retardation protein oligophrenin-1 is required for dendritic spine morphogenesis.</title>
        <authorList>
            <person name="Govek E.E."/>
            <person name="Newey S.E."/>
            <person name="Akerman C.J."/>
            <person name="Cross J.R."/>
            <person name="Van der Veken L."/>
            <person name="Van Aelst L."/>
        </authorList>
    </citation>
    <scope>FUNCTION</scope>
    <scope>TISSUE SPECIFICITY</scope>
    <scope>SUBCELLULAR LOCATION</scope>
    <scope>INTERACTION WITH HOMER1</scope>
</reference>
<reference key="3">
    <citation type="journal article" date="2004" name="Neuroscience">
        <title>Evidence that a major site of expression of the RHO-GTPASE activating protein, oligophrenin-1, is peripheral myelin.</title>
        <authorList>
            <person name="Xiao J."/>
            <person name="Neylon C.B."/>
            <person name="Nicholson G.A."/>
            <person name="Furness J.B."/>
        </authorList>
    </citation>
    <scope>TISSUE SPECIFICITY</scope>
</reference>
<reference key="4">
    <citation type="journal article" date="2009" name="Curr. Biol.">
        <title>The Rho-linked mental retardation protein OPHN1 controls synaptic vesicle endocytosis via endophilin A1.</title>
        <authorList>
            <person name="Nakano-Kobayashi A."/>
            <person name="Kasri N.N."/>
            <person name="Newey S.E."/>
            <person name="Van Aelst L."/>
        </authorList>
    </citation>
    <scope>FUNCTION</scope>
    <scope>INTERACTION WITH SH3GL2</scope>
</reference>
<reference key="5">
    <citation type="journal article" date="2009" name="Genes Dev.">
        <title>The Rho-linked mental retardation protein oligophrenin-1 controls synapse maturation and plasticity by stabilizing AMPA receptors.</title>
        <authorList>
            <person name="Nadif Kasri N."/>
            <person name="Nakano-Kobayashi A."/>
            <person name="Malinow R."/>
            <person name="Li B."/>
            <person name="Van Aelst L."/>
        </authorList>
    </citation>
    <scope>FUNCTION</scope>
    <scope>INTERACTION WITH AMPA RECEPTOR COMPLEXES</scope>
    <scope>SUBCELLULAR LOCATION</scope>
</reference>
<reference key="6">
    <citation type="journal article" date="2011" name="Nat. Neurosci.">
        <title>A circadian clock in hippocampus is regulated by interaction between oligophrenin-1 and Rev-erbalpha.</title>
        <authorList>
            <person name="Valnegri P."/>
            <person name="Khelfaoui M."/>
            <person name="Dorseuil O."/>
            <person name="Bassani S."/>
            <person name="Lagneaux C."/>
            <person name="Gianfelice A."/>
            <person name="Benfante R."/>
            <person name="Chelly J."/>
            <person name="Billuart P."/>
            <person name="Sala C."/>
            <person name="Passafaro M."/>
        </authorList>
    </citation>
    <scope>INTERACTION WITH NR1D1</scope>
</reference>
<accession>P0CAX5</accession>